<accession>P12031</accession>
<feature type="chain" id="PRO_0000204302" description="Hemocyanin, beta-C chain unit D">
    <location>
        <begin position="1" status="less than"/>
        <end position="410" status="greater than"/>
    </location>
</feature>
<feature type="binding site" evidence="1">
    <location>
        <position position="44"/>
    </location>
    <ligand>
        <name>Cu cation</name>
        <dbReference type="ChEBI" id="CHEBI:23378"/>
        <label>A</label>
    </ligand>
</feature>
<feature type="binding site" evidence="1">
    <location>
        <position position="55"/>
    </location>
    <ligand>
        <name>Cu cation</name>
        <dbReference type="ChEBI" id="CHEBI:23378"/>
        <label>A</label>
    </ligand>
</feature>
<feature type="binding site" evidence="1">
    <location>
        <position position="71"/>
    </location>
    <ligand>
        <name>Cu cation</name>
        <dbReference type="ChEBI" id="CHEBI:23378"/>
        <label>A</label>
    </ligand>
</feature>
<feature type="binding site" evidence="1">
    <location>
        <position position="175"/>
    </location>
    <ligand>
        <name>Cu cation</name>
        <dbReference type="ChEBI" id="CHEBI:23378"/>
        <label>B</label>
    </ligand>
</feature>
<feature type="binding site" evidence="1">
    <location>
        <position position="179"/>
    </location>
    <ligand>
        <name>Cu cation</name>
        <dbReference type="ChEBI" id="CHEBI:23378"/>
        <label>B</label>
    </ligand>
</feature>
<feature type="binding site" evidence="1">
    <location>
        <position position="206"/>
    </location>
    <ligand>
        <name>Cu cation</name>
        <dbReference type="ChEBI" id="CHEBI:23378"/>
        <label>B</label>
    </ligand>
</feature>
<feature type="glycosylation site" description="N-linked (GlcNAc...) asparagine">
    <location>
        <position position="253"/>
    </location>
</feature>
<feature type="disulfide bond">
    <location>
        <begin position="50"/>
        <end position="59"/>
    </location>
</feature>
<feature type="disulfide bond">
    <location>
        <begin position="165"/>
        <end position="232"/>
    </location>
</feature>
<feature type="disulfide bond">
    <location>
        <begin position="321"/>
        <end position="332"/>
    </location>
</feature>
<feature type="cross-link" description="2'-(S-cysteinyl)-histidine (Cys-His)" evidence="2">
    <location>
        <begin position="60"/>
        <end position="62"/>
    </location>
</feature>
<feature type="sequence conflict" description="In Ref. 1; AA sequence." evidence="3" ref="1">
    <original>C</original>
    <variation>S</variation>
    <location>
        <position position="60"/>
    </location>
</feature>
<feature type="sequence conflict" description="In Ref. 1; AA sequence." evidence="3" ref="1">
    <original>H</original>
    <variation>S</variation>
    <location>
        <position position="62"/>
    </location>
</feature>
<feature type="sequence conflict" description="In Ref. 1; AA sequence." evidence="3" ref="1">
    <original>C</original>
    <variation>D</variation>
    <location>
        <position position="165"/>
    </location>
</feature>
<feature type="non-terminal residue">
    <location>
        <position position="1"/>
    </location>
</feature>
<feature type="non-terminal residue">
    <location>
        <position position="410"/>
    </location>
</feature>
<sequence>DAVTVASHVRKDLDTLTAGEIESLRSAFLDIQQDHTYENIASFHGKPGLCQHEGHKVACCVHGMPTFPSWHRLYVEQVEEALLDHGSSVAVPYFDWISPIQKLPDLISKATYYNSREQRFDPNPFFSGKVAGEDAVTTRDPQPELFNNNYFYEQALYALEQDNFCDFEIQFEVLHNALHSWLGGHAKYSFSSLDYTAFDPVFFLHHANTDRLWAIWQELQRYRGLPYNEADCAINLMRKPLQPFQDKKLNPRNITNIYSRPADTFDYRNHFHYEYDTLELNHQTVPQLENLLKRRQEYGRVFAGFLIHNNGLSADVTVYVCVPSGPKGKNDCNHKAGVFSVLGGELEMPFTFDRLYKLQITDTIKQLGLKVNNAASYQLKVEIKAVPGTLLDPHILPDPSIIFEPGTKER</sequence>
<organism>
    <name type="scientific">Helix pomatia</name>
    <name type="common">Roman snail</name>
    <name type="synonym">Edible snail</name>
    <dbReference type="NCBI Taxonomy" id="6536"/>
    <lineage>
        <taxon>Eukaryota</taxon>
        <taxon>Metazoa</taxon>
        <taxon>Spiralia</taxon>
        <taxon>Lophotrochozoa</taxon>
        <taxon>Mollusca</taxon>
        <taxon>Gastropoda</taxon>
        <taxon>Heterobranchia</taxon>
        <taxon>Euthyneura</taxon>
        <taxon>Panpulmonata</taxon>
        <taxon>Eupulmonata</taxon>
        <taxon>Stylommatophora</taxon>
        <taxon>Helicina</taxon>
        <taxon>Helicoidea</taxon>
        <taxon>Helicidae</taxon>
        <taxon>Helix</taxon>
    </lineage>
</organism>
<name>HCYB_HELPO</name>
<dbReference type="PIR" id="A29393">
    <property type="entry name" value="A29393"/>
</dbReference>
<dbReference type="SMR" id="P12031"/>
<dbReference type="GO" id="GO:0046872">
    <property type="term" value="F:metal ion binding"/>
    <property type="evidence" value="ECO:0007669"/>
    <property type="project" value="UniProtKB-KW"/>
</dbReference>
<dbReference type="GO" id="GO:0016491">
    <property type="term" value="F:oxidoreductase activity"/>
    <property type="evidence" value="ECO:0007669"/>
    <property type="project" value="InterPro"/>
</dbReference>
<dbReference type="GO" id="GO:0005344">
    <property type="term" value="F:oxygen carrier activity"/>
    <property type="evidence" value="ECO:0007669"/>
    <property type="project" value="UniProtKB-KW"/>
</dbReference>
<dbReference type="Gene3D" id="1.10.1280.10">
    <property type="entry name" value="Di-copper center containing domain from catechol oxidase"/>
    <property type="match status" value="1"/>
</dbReference>
<dbReference type="Gene3D" id="2.60.310.10">
    <property type="entry name" value="Haemocyanin C-terminal domain"/>
    <property type="match status" value="1"/>
</dbReference>
<dbReference type="InterPro" id="IPR008922">
    <property type="entry name" value="Di-copper_centre_dom_sf"/>
</dbReference>
<dbReference type="InterPro" id="IPR028999">
    <property type="entry name" value="Haemocyanin_beta-sandwich"/>
</dbReference>
<dbReference type="InterPro" id="IPR036848">
    <property type="entry name" value="Haemocyanin_C_sf"/>
</dbReference>
<dbReference type="InterPro" id="IPR050316">
    <property type="entry name" value="Tyrosinase/Hemocyanin"/>
</dbReference>
<dbReference type="InterPro" id="IPR002227">
    <property type="entry name" value="Tyrosinase_Cu-bd"/>
</dbReference>
<dbReference type="PANTHER" id="PTHR11474">
    <property type="entry name" value="TYROSINASE FAMILY MEMBER"/>
    <property type="match status" value="1"/>
</dbReference>
<dbReference type="Pfam" id="PF14830">
    <property type="entry name" value="Haemocyan_bet_s"/>
    <property type="match status" value="1"/>
</dbReference>
<dbReference type="Pfam" id="PF00264">
    <property type="entry name" value="Tyrosinase"/>
    <property type="match status" value="1"/>
</dbReference>
<dbReference type="PRINTS" id="PR00092">
    <property type="entry name" value="TYROSINASE"/>
</dbReference>
<dbReference type="SUPFAM" id="SSF81277">
    <property type="entry name" value="C-terminal domain of mollusc hemocyanin"/>
    <property type="match status" value="1"/>
</dbReference>
<dbReference type="SUPFAM" id="SSF48056">
    <property type="entry name" value="Di-copper centre-containing domain"/>
    <property type="match status" value="1"/>
</dbReference>
<dbReference type="PROSITE" id="PS00497">
    <property type="entry name" value="TYROSINASE_1"/>
    <property type="match status" value="1"/>
</dbReference>
<dbReference type="PROSITE" id="PS00498">
    <property type="entry name" value="TYROSINASE_2"/>
    <property type="match status" value="1"/>
</dbReference>
<evidence type="ECO:0000250" key="1"/>
<evidence type="ECO:0000269" key="2">
    <source>
    </source>
</evidence>
<evidence type="ECO:0000305" key="3"/>
<comment type="function">
    <text>Hemocyanins are copper-containing oxygen carriers occurring freely dissolved in the hemolymph of many mollusks and arthropods.</text>
</comment>
<comment type="cofactor">
    <cofactor>
        <name>Cu(2+)</name>
        <dbReference type="ChEBI" id="CHEBI:29036"/>
    </cofactor>
    <text>Binds 2 copper ions per heterodimer.</text>
</comment>
<comment type="subunit">
    <text>Decamers of large identical subunits (450 kDa), each containing 8 globular oxygen-binding functional units.</text>
</comment>
<comment type="similarity">
    <text evidence="3">Belongs to the tyrosinase family. Hemocyanin subfamily.</text>
</comment>
<keyword id="KW-0186">Copper</keyword>
<keyword id="KW-0903">Direct protein sequencing</keyword>
<keyword id="KW-1015">Disulfide bond</keyword>
<keyword id="KW-0325">Glycoprotein</keyword>
<keyword id="KW-0479">Metal-binding</keyword>
<keyword id="KW-0561">Oxygen transport</keyword>
<keyword id="KW-0677">Repeat</keyword>
<keyword id="KW-0883">Thioether bond</keyword>
<keyword id="KW-0813">Transport</keyword>
<proteinExistence type="evidence at protein level"/>
<reference key="1">
    <citation type="journal article" date="1987" name="Biol. Chem. Hoppe-Seyler">
        <title>Complete amino-acid sequence of a functional unit from a molluscan hemocyanin (Helix pomatia).</title>
        <authorList>
            <person name="Drexel R."/>
            <person name="Siegmund S."/>
            <person name="Schneider H.J."/>
            <person name="Linzen B."/>
            <person name="Gielens C."/>
            <person name="Preaux G."/>
            <person name="Lontie R."/>
            <person name="Kellermann J."/>
            <person name="Lottspeich F."/>
        </authorList>
    </citation>
    <scope>PROTEIN SEQUENCE</scope>
</reference>
<reference key="2">
    <citation type="journal article" date="1997" name="Eur. J. Biochem.">
        <title>Evidence for a cysteine-histidine thioether bridge in functional units of molluscan haemocyanins and location of the disulfide bridges in functional units d and g of the beta-c-haemocyanin of Helix pomatia.</title>
        <authorList>
            <person name="Gielens C."/>
            <person name="de Geest N."/>
            <person name="Xin X.-Q."/>
            <person name="Devreese B."/>
            <person name="van Beeumen J."/>
            <person name="Preaux G."/>
        </authorList>
    </citation>
    <scope>PARTIAL PROTEIN SEQUENCE</scope>
    <scope>SEQUENCE REVISION</scope>
    <scope>THIOETHER BOND</scope>
    <scope>IDENTIFICATION BY MASS SPECTROMETRY</scope>
</reference>
<protein>
    <recommendedName>
        <fullName>Hemocyanin, beta-C chain unit D</fullName>
    </recommendedName>
</protein>